<organism>
    <name type="scientific">Aspergillus flavus (strain ATCC 200026 / FGSC A1120 / IAM 13836 / NRRL 3357 / JCM 12722 / SRRC 167)</name>
    <dbReference type="NCBI Taxonomy" id="332952"/>
    <lineage>
        <taxon>Eukaryota</taxon>
        <taxon>Fungi</taxon>
        <taxon>Dikarya</taxon>
        <taxon>Ascomycota</taxon>
        <taxon>Pezizomycotina</taxon>
        <taxon>Eurotiomycetes</taxon>
        <taxon>Eurotiomycetidae</taxon>
        <taxon>Eurotiales</taxon>
        <taxon>Aspergillaceae</taxon>
        <taxon>Aspergillus</taxon>
        <taxon>Aspergillus subgen. Circumdati</taxon>
    </lineage>
</organism>
<evidence type="ECO:0000250" key="1">
    <source>
        <dbReference type="UniProtKB" id="P00590"/>
    </source>
</evidence>
<evidence type="ECO:0000250" key="2">
    <source>
        <dbReference type="UniProtKB" id="P11373"/>
    </source>
</evidence>
<evidence type="ECO:0000250" key="3">
    <source>
        <dbReference type="UniProtKB" id="P52956"/>
    </source>
</evidence>
<evidence type="ECO:0000255" key="4"/>
<evidence type="ECO:0000255" key="5">
    <source>
        <dbReference type="PROSITE-ProRule" id="PRU10108"/>
    </source>
</evidence>
<evidence type="ECO:0000255" key="6">
    <source>
        <dbReference type="PROSITE-ProRule" id="PRU10109"/>
    </source>
</evidence>
<evidence type="ECO:0000305" key="7"/>
<proteinExistence type="inferred from homology"/>
<protein>
    <recommendedName>
        <fullName>Probable cutinase 1</fullName>
        <ecNumber evidence="5 6">3.1.1.74</ecNumber>
    </recommendedName>
    <alternativeName>
        <fullName>Cutin hydrolase 1</fullName>
    </alternativeName>
</protein>
<sequence>MVMLRSLLVSALAALAAASPIAEPADQSLEARQLGSSNDLTNGACKDVTLIFARGSTEMGNMGTVIGPPLCSALKSKLGADKVACQGVGGLYTGGLMQNALPQNTDPGAISTAKSLFEQASTKCPNTQIVAGGYSQGSAVIDNAVQQLSAEVKDKVKGVVFFGFTRNLQDKGQIPNYPKDNVKVFCAMGDLVCDGTLIVTAAHLTYTINAPEAASFLASKVQSA</sequence>
<keyword id="KW-1015">Disulfide bond</keyword>
<keyword id="KW-0378">Hydrolase</keyword>
<keyword id="KW-0964">Secreted</keyword>
<keyword id="KW-0719">Serine esterase</keyword>
<keyword id="KW-0732">Signal</keyword>
<accession>B8NCM8</accession>
<name>CUTI3_ASPFN</name>
<dbReference type="EC" id="3.1.1.74" evidence="5 6"/>
<dbReference type="EMBL" id="EQ963476">
    <property type="protein sequence ID" value="EED52233.1"/>
    <property type="molecule type" value="Genomic_DNA"/>
</dbReference>
<dbReference type="RefSeq" id="XP_002377397.1">
    <property type="nucleotide sequence ID" value="XM_002377356.1"/>
</dbReference>
<dbReference type="SMR" id="B8NCM8"/>
<dbReference type="ESTHER" id="aspor-q2u199">
    <property type="family name" value="Cutinase"/>
</dbReference>
<dbReference type="EnsemblFungi" id="EED52233">
    <property type="protein sequence ID" value="EED52233"/>
    <property type="gene ID" value="AFLA_039350"/>
</dbReference>
<dbReference type="VEuPathDB" id="FungiDB:AFLA_007482"/>
<dbReference type="eggNOG" id="ENOG502SI38">
    <property type="taxonomic scope" value="Eukaryota"/>
</dbReference>
<dbReference type="HOGENOM" id="CLU_040058_2_0_1"/>
<dbReference type="OMA" id="FFGFTRN"/>
<dbReference type="GO" id="GO:0005576">
    <property type="term" value="C:extracellular region"/>
    <property type="evidence" value="ECO:0007669"/>
    <property type="project" value="UniProtKB-SubCell"/>
</dbReference>
<dbReference type="GO" id="GO:0050525">
    <property type="term" value="F:cutinase activity"/>
    <property type="evidence" value="ECO:0000250"/>
    <property type="project" value="UniProtKB"/>
</dbReference>
<dbReference type="GO" id="GO:0016052">
    <property type="term" value="P:carbohydrate catabolic process"/>
    <property type="evidence" value="ECO:0007669"/>
    <property type="project" value="TreeGrafter"/>
</dbReference>
<dbReference type="FunFam" id="3.40.50.1820:FF:000235">
    <property type="entry name" value="Cutinase 1"/>
    <property type="match status" value="1"/>
</dbReference>
<dbReference type="Gene3D" id="3.40.50.1820">
    <property type="entry name" value="alpha/beta hydrolase"/>
    <property type="match status" value="1"/>
</dbReference>
<dbReference type="InterPro" id="IPR029058">
    <property type="entry name" value="AB_hydrolase_fold"/>
</dbReference>
<dbReference type="InterPro" id="IPR000675">
    <property type="entry name" value="Cutinase/axe"/>
</dbReference>
<dbReference type="InterPro" id="IPR043580">
    <property type="entry name" value="CUTINASE_1"/>
</dbReference>
<dbReference type="InterPro" id="IPR043579">
    <property type="entry name" value="CUTINASE_2"/>
</dbReference>
<dbReference type="InterPro" id="IPR011150">
    <property type="entry name" value="Cutinase_monf"/>
</dbReference>
<dbReference type="PANTHER" id="PTHR48250:SF3">
    <property type="entry name" value="CUTINASE 1-RELATED"/>
    <property type="match status" value="1"/>
</dbReference>
<dbReference type="PANTHER" id="PTHR48250">
    <property type="entry name" value="CUTINASE 2-RELATED"/>
    <property type="match status" value="1"/>
</dbReference>
<dbReference type="Pfam" id="PF01083">
    <property type="entry name" value="Cutinase"/>
    <property type="match status" value="1"/>
</dbReference>
<dbReference type="PRINTS" id="PR00129">
    <property type="entry name" value="CUTINASE"/>
</dbReference>
<dbReference type="SMART" id="SM01110">
    <property type="entry name" value="Cutinase"/>
    <property type="match status" value="1"/>
</dbReference>
<dbReference type="SUPFAM" id="SSF53474">
    <property type="entry name" value="alpha/beta-Hydrolases"/>
    <property type="match status" value="1"/>
</dbReference>
<dbReference type="PROSITE" id="PS00155">
    <property type="entry name" value="CUTINASE_1"/>
    <property type="match status" value="1"/>
</dbReference>
<dbReference type="PROSITE" id="PS00931">
    <property type="entry name" value="CUTINASE_2"/>
    <property type="match status" value="1"/>
</dbReference>
<comment type="function">
    <text evidence="1">Catalyzes the hydrolysis of complex carboxylic polyesters found in the cell wall of plants (By similarity). Degrades cutin, a macromolecule that forms the structure of the plant cuticle (By similarity).</text>
</comment>
<comment type="catalytic activity">
    <reaction evidence="5 6">
        <text>cutin + H2O = cutin monomers.</text>
        <dbReference type="EC" id="3.1.1.74"/>
    </reaction>
</comment>
<comment type="subcellular location">
    <subcellularLocation>
        <location evidence="2">Secreted</location>
    </subcellularLocation>
</comment>
<comment type="similarity">
    <text evidence="7">Belongs to the cutinase family.</text>
</comment>
<feature type="signal peptide" evidence="4">
    <location>
        <begin position="1"/>
        <end position="18"/>
    </location>
</feature>
<feature type="chain" id="PRO_0000395249" description="Probable cutinase 1">
    <location>
        <begin position="19"/>
        <end position="224"/>
    </location>
</feature>
<feature type="active site" description="Nucleophile" evidence="1">
    <location>
        <position position="135"/>
    </location>
</feature>
<feature type="active site" evidence="1">
    <location>
        <position position="190"/>
    </location>
</feature>
<feature type="active site" description="Proton donor/acceptor" evidence="1">
    <location>
        <position position="203"/>
    </location>
</feature>
<feature type="site" description="Transition state stabilizer" evidence="1">
    <location>
        <position position="56"/>
    </location>
</feature>
<feature type="site" description="Transition state stabilizer" evidence="1">
    <location>
        <position position="136"/>
    </location>
</feature>
<feature type="disulfide bond" evidence="3">
    <location>
        <begin position="45"/>
        <end position="124"/>
    </location>
</feature>
<feature type="disulfide bond" evidence="3">
    <location>
        <begin position="71"/>
        <end position="85"/>
    </location>
</feature>
<feature type="disulfide bond" evidence="3">
    <location>
        <begin position="186"/>
        <end position="193"/>
    </location>
</feature>
<reference key="1">
    <citation type="journal article" date="2015" name="Genome Announc.">
        <title>Genome sequence of Aspergillus flavus NRRL 3357, a strain that causes aflatoxin contamination of food and feed.</title>
        <authorList>
            <person name="Nierman W.C."/>
            <person name="Yu J."/>
            <person name="Fedorova-Abrams N.D."/>
            <person name="Losada L."/>
            <person name="Cleveland T.E."/>
            <person name="Bhatnagar D."/>
            <person name="Bennett J.W."/>
            <person name="Dean R."/>
            <person name="Payne G.A."/>
        </authorList>
    </citation>
    <scope>NUCLEOTIDE SEQUENCE [LARGE SCALE GENOMIC DNA]</scope>
    <source>
        <strain>ATCC 200026 / FGSC A1120 / IAM 13836 / NRRL 3357 / JCM 12722 / SRRC 167</strain>
    </source>
</reference>
<gene>
    <name type="ORF">AFLA_039350</name>
</gene>